<feature type="chain" id="PRO_0000064570" description="Microtubule protein alp7">
    <location>
        <begin position="1"/>
        <end position="474"/>
    </location>
</feature>
<feature type="region of interest" description="Disordered" evidence="2">
    <location>
        <begin position="1"/>
        <end position="79"/>
    </location>
</feature>
<feature type="region of interest" description="Disordered" evidence="2">
    <location>
        <begin position="93"/>
        <end position="114"/>
    </location>
</feature>
<feature type="region of interest" description="Disordered" evidence="2">
    <location>
        <begin position="164"/>
        <end position="223"/>
    </location>
</feature>
<feature type="coiled-coil region" evidence="1">
    <location>
        <begin position="219"/>
        <end position="273"/>
    </location>
</feature>
<feature type="coiled-coil region" evidence="1">
    <location>
        <begin position="367"/>
        <end position="471"/>
    </location>
</feature>
<feature type="compositionally biased region" description="Low complexity" evidence="2">
    <location>
        <begin position="1"/>
        <end position="20"/>
    </location>
</feature>
<feature type="compositionally biased region" description="Basic and acidic residues" evidence="2">
    <location>
        <begin position="25"/>
        <end position="36"/>
    </location>
</feature>
<feature type="compositionally biased region" description="Polar residues" evidence="2">
    <location>
        <begin position="66"/>
        <end position="76"/>
    </location>
</feature>
<feature type="compositionally biased region" description="Polar residues" evidence="2">
    <location>
        <begin position="177"/>
        <end position="189"/>
    </location>
</feature>
<feature type="compositionally biased region" description="Polar residues" evidence="2">
    <location>
        <begin position="201"/>
        <end position="223"/>
    </location>
</feature>
<feature type="modified residue" description="Phosphoserine" evidence="5">
    <location>
        <position position="17"/>
    </location>
</feature>
<proteinExistence type="evidence at protein level"/>
<accession>Q9URY2</accession>
<accession>Q9UU56</accession>
<sequence>MSDIVSSSTDYSRRSPSSSSIGTNETDHTGFHEKRQGASSESLIPPAQRSSEESMPAPKLFPKLTSKPNPQLNLKDTLNKRVSDRLQALELNKSFDFSGTPRPMHPISHPLSQHKTPEFKHRKRNVESILTPKNPSLFSSSNAASQRGSLNTAPSNFAYSHSSSLQTSASSRPPVLSNGSFPRQTNTAPLNPPVHLKDNIRNSATPSTSQADIPTQYPINSTQKQQAKYEAEIEGYKAKLAGTYHEISVLQNTIVNVSGQLIAVNDQLQQLRSGKASTSPSTKDTNMRLVEGHNEETLALQRGKYTQEEVDKLIQERMEKVAEDLHAQYSAKHTQKINAFKANYARKYEATIQELQNQIGTAPNAPKISNSNWEEERRALKADNQTLQKQLEKAIQERQDMSDFLNNFKADMAKSDKLLMQQQSQQTGDLETLRLQLQALQEELRVEREERQQLIQMSEDLVIAMDQLNLEQKS</sequence>
<organism>
    <name type="scientific">Schizosaccharomyces pombe (strain 972 / ATCC 24843)</name>
    <name type="common">Fission yeast</name>
    <dbReference type="NCBI Taxonomy" id="284812"/>
    <lineage>
        <taxon>Eukaryota</taxon>
        <taxon>Fungi</taxon>
        <taxon>Dikarya</taxon>
        <taxon>Ascomycota</taxon>
        <taxon>Taphrinomycotina</taxon>
        <taxon>Schizosaccharomycetes</taxon>
        <taxon>Schizosaccharomycetales</taxon>
        <taxon>Schizosaccharomycetaceae</taxon>
        <taxon>Schizosaccharomyces</taxon>
    </lineage>
</organism>
<reference key="1">
    <citation type="journal article" date="2002" name="Nature">
        <title>The genome sequence of Schizosaccharomyces pombe.</title>
        <authorList>
            <person name="Wood V."/>
            <person name="Gwilliam R."/>
            <person name="Rajandream M.A."/>
            <person name="Lyne M.H."/>
            <person name="Lyne R."/>
            <person name="Stewart A."/>
            <person name="Sgouros J.G."/>
            <person name="Peat N."/>
            <person name="Hayles J."/>
            <person name="Baker S.G."/>
            <person name="Basham D."/>
            <person name="Bowman S."/>
            <person name="Brooks K."/>
            <person name="Brown D."/>
            <person name="Brown S."/>
            <person name="Chillingworth T."/>
            <person name="Churcher C.M."/>
            <person name="Collins M."/>
            <person name="Connor R."/>
            <person name="Cronin A."/>
            <person name="Davis P."/>
            <person name="Feltwell T."/>
            <person name="Fraser A."/>
            <person name="Gentles S."/>
            <person name="Goble A."/>
            <person name="Hamlin N."/>
            <person name="Harris D.E."/>
            <person name="Hidalgo J."/>
            <person name="Hodgson G."/>
            <person name="Holroyd S."/>
            <person name="Hornsby T."/>
            <person name="Howarth S."/>
            <person name="Huckle E.J."/>
            <person name="Hunt S."/>
            <person name="Jagels K."/>
            <person name="James K.D."/>
            <person name="Jones L."/>
            <person name="Jones M."/>
            <person name="Leather S."/>
            <person name="McDonald S."/>
            <person name="McLean J."/>
            <person name="Mooney P."/>
            <person name="Moule S."/>
            <person name="Mungall K.L."/>
            <person name="Murphy L.D."/>
            <person name="Niblett D."/>
            <person name="Odell C."/>
            <person name="Oliver K."/>
            <person name="O'Neil S."/>
            <person name="Pearson D."/>
            <person name="Quail M.A."/>
            <person name="Rabbinowitsch E."/>
            <person name="Rutherford K.M."/>
            <person name="Rutter S."/>
            <person name="Saunders D."/>
            <person name="Seeger K."/>
            <person name="Sharp S."/>
            <person name="Skelton J."/>
            <person name="Simmonds M.N."/>
            <person name="Squares R."/>
            <person name="Squares S."/>
            <person name="Stevens K."/>
            <person name="Taylor K."/>
            <person name="Taylor R.G."/>
            <person name="Tivey A."/>
            <person name="Walsh S.V."/>
            <person name="Warren T."/>
            <person name="Whitehead S."/>
            <person name="Woodward J.R."/>
            <person name="Volckaert G."/>
            <person name="Aert R."/>
            <person name="Robben J."/>
            <person name="Grymonprez B."/>
            <person name="Weltjens I."/>
            <person name="Vanstreels E."/>
            <person name="Rieger M."/>
            <person name="Schaefer M."/>
            <person name="Mueller-Auer S."/>
            <person name="Gabel C."/>
            <person name="Fuchs M."/>
            <person name="Duesterhoeft A."/>
            <person name="Fritzc C."/>
            <person name="Holzer E."/>
            <person name="Moestl D."/>
            <person name="Hilbert H."/>
            <person name="Borzym K."/>
            <person name="Langer I."/>
            <person name="Beck A."/>
            <person name="Lehrach H."/>
            <person name="Reinhardt R."/>
            <person name="Pohl T.M."/>
            <person name="Eger P."/>
            <person name="Zimmermann W."/>
            <person name="Wedler H."/>
            <person name="Wambutt R."/>
            <person name="Purnelle B."/>
            <person name="Goffeau A."/>
            <person name="Cadieu E."/>
            <person name="Dreano S."/>
            <person name="Gloux S."/>
            <person name="Lelaure V."/>
            <person name="Mottier S."/>
            <person name="Galibert F."/>
            <person name="Aves S.J."/>
            <person name="Xiang Z."/>
            <person name="Hunt C."/>
            <person name="Moore K."/>
            <person name="Hurst S.M."/>
            <person name="Lucas M."/>
            <person name="Rochet M."/>
            <person name="Gaillardin C."/>
            <person name="Tallada V.A."/>
            <person name="Garzon A."/>
            <person name="Thode G."/>
            <person name="Daga R.R."/>
            <person name="Cruzado L."/>
            <person name="Jimenez J."/>
            <person name="Sanchez M."/>
            <person name="del Rey F."/>
            <person name="Benito J."/>
            <person name="Dominguez A."/>
            <person name="Revuelta J.L."/>
            <person name="Moreno S."/>
            <person name="Armstrong J."/>
            <person name="Forsburg S.L."/>
            <person name="Cerutti L."/>
            <person name="Lowe T."/>
            <person name="McCombie W.R."/>
            <person name="Paulsen I."/>
            <person name="Potashkin J."/>
            <person name="Shpakovski G.V."/>
            <person name="Ussery D."/>
            <person name="Barrell B.G."/>
            <person name="Nurse P."/>
        </authorList>
    </citation>
    <scope>NUCLEOTIDE SEQUENCE [LARGE SCALE GENOMIC DNA]</scope>
    <source>
        <strain>972 / ATCC 24843</strain>
    </source>
</reference>
<reference key="2">
    <citation type="journal article" date="2000" name="Genes Cells">
        <title>Large-scale screening of intracellular protein localization in living fission yeast cells by the use of a GFP-fusion genomic DNA library.</title>
        <authorList>
            <person name="Ding D.-Q."/>
            <person name="Tomita Y."/>
            <person name="Yamamoto A."/>
            <person name="Chikashige Y."/>
            <person name="Haraguchi T."/>
            <person name="Hiraoka Y."/>
        </authorList>
    </citation>
    <scope>NUCLEOTIDE SEQUENCE [LARGE SCALE GENOMIC DNA] OF 104-273</scope>
    <scope>SUBCELLULAR LOCATION</scope>
    <source>
        <strain>ATCC 38364 / 968</strain>
    </source>
</reference>
<reference key="3">
    <citation type="journal article" date="2004" name="Mol. Biol. Cell">
        <title>Interdependency of fission yeast Alp14/TOG and coiled coil protein Alp7 in microtubule localization and bipolar spindle formation.</title>
        <authorList>
            <person name="Sato M."/>
            <person name="Vardy L."/>
            <person name="Angel Garcia M."/>
            <person name="Koonrugsa N."/>
            <person name="Toda T."/>
        </authorList>
    </citation>
    <scope>FUNCTION</scope>
    <scope>INTERACTION WITH ALP14</scope>
    <scope>SUBCELLULAR LOCATION</scope>
</reference>
<reference key="4">
    <citation type="journal article" date="2006" name="Mol. Biol. Cell">
        <title>The fission yeast transforming acidic coiled coil-related protein Mia1p/Alp7p is required for formation and maintenance of persistent microtubule-organizing centers at the nuclear envelope.</title>
        <authorList>
            <person name="Zheng L."/>
            <person name="Schwartz C."/>
            <person name="Wee L."/>
            <person name="Oliferenko S."/>
        </authorList>
    </citation>
    <scope>FUNCTION</scope>
    <scope>SUBCELLULAR LOCATION</scope>
</reference>
<reference key="5">
    <citation type="journal article" date="2006" name="Nat. Biotechnol.">
        <title>ORFeome cloning and global analysis of protein localization in the fission yeast Schizosaccharomyces pombe.</title>
        <authorList>
            <person name="Matsuyama A."/>
            <person name="Arai R."/>
            <person name="Yashiroda Y."/>
            <person name="Shirai A."/>
            <person name="Kamata A."/>
            <person name="Sekido S."/>
            <person name="Kobayashi Y."/>
            <person name="Hashimoto A."/>
            <person name="Hamamoto M."/>
            <person name="Hiraoka Y."/>
            <person name="Horinouchi S."/>
            <person name="Yoshida M."/>
        </authorList>
    </citation>
    <scope>SUBCELLULAR LOCATION [LARGE SCALE ANALYSIS]</scope>
</reference>
<reference key="6">
    <citation type="journal article" date="2008" name="J. Proteome Res.">
        <title>Phosphoproteome analysis of fission yeast.</title>
        <authorList>
            <person name="Wilson-Grady J.T."/>
            <person name="Villen J."/>
            <person name="Gygi S.P."/>
        </authorList>
    </citation>
    <scope>PHOSPHORYLATION [LARGE SCALE ANALYSIS] AT SER-17</scope>
    <scope>IDENTIFICATION BY MASS SPECTROMETRY</scope>
</reference>
<comment type="function">
    <text evidence="3 4">Required for bipolar spindle formation and proper chromosome segregation. Has an indirect role in connecting the kinetochores and the plus end of pole to chromosome microtubules by targeting alp14 to the spindle pole body. Involved in the emergence of large microtubule organizing centers (MTOC) in interphase cells. Attaches to the minus ends of microtubules and associates with the sites of microtubule attachment on the nuclear envelope. This leads to the stabilization of the microtubule bundles.</text>
</comment>
<comment type="subunit">
    <text evidence="3">Interacts with alp14.</text>
</comment>
<comment type="interaction">
    <interactant intactId="EBI-1556697">
        <id>Q9URY2</id>
    </interactant>
    <interactant intactId="EBI-1556727">
        <id>O94534</id>
        <label>alp14</label>
    </interactant>
    <organismsDiffer>false</organismsDiffer>
    <experiments>13</experiments>
</comment>
<comment type="interaction">
    <interactant intactId="EBI-1556697">
        <id>Q9URY2</id>
    </interactant>
    <interactant intactId="EBI-1002565">
        <id>Q10173</id>
        <label>nuf2</label>
    </interactant>
    <organismsDiffer>false</organismsDiffer>
    <experiments>3</experiments>
</comment>
<comment type="interaction">
    <interactant intactId="EBI-1556697">
        <id>Q9URY2</id>
    </interactant>
    <interactant intactId="EBI-7633620">
        <id>Q92351</id>
        <label>pcp1</label>
    </interactant>
    <organismsDiffer>false</organismsDiffer>
    <experiments>3</experiments>
</comment>
<comment type="subcellular location">
    <subcellularLocation>
        <location>Nucleus</location>
    </subcellularLocation>
    <subcellularLocation>
        <location>Cytoplasm</location>
    </subcellularLocation>
    <subcellularLocation>
        <location>Cytoplasm</location>
        <location>Cytoskeleton</location>
        <location>Spindle</location>
    </subcellularLocation>
    <subcellularLocation>
        <location>Chromosome</location>
        <location>Centromere</location>
        <location>Kinetochore</location>
    </subcellularLocation>
    <text>Associated with the equatorial MTOC, spindle midzones, spindle pole body and mitotic kinetochore periphery. Spindle and kinetochore localization is alp14-dependent.</text>
</comment>
<dbReference type="EMBL" id="CU329670">
    <property type="protein sequence ID" value="CAB63493.1"/>
    <property type="molecule type" value="Genomic_DNA"/>
</dbReference>
<dbReference type="EMBL" id="AB027802">
    <property type="protein sequence ID" value="BAA87106.1"/>
    <property type="molecule type" value="Genomic_DNA"/>
</dbReference>
<dbReference type="PIR" id="T50258">
    <property type="entry name" value="T50258"/>
</dbReference>
<dbReference type="RefSeq" id="NP_594820.1">
    <property type="nucleotide sequence ID" value="NM_001020249.2"/>
</dbReference>
<dbReference type="SMR" id="Q9URY2"/>
<dbReference type="BioGRID" id="279804">
    <property type="interactions" value="32"/>
</dbReference>
<dbReference type="DIP" id="DIP-39987N"/>
<dbReference type="FunCoup" id="Q9URY2">
    <property type="interactions" value="6"/>
</dbReference>
<dbReference type="IntAct" id="Q9URY2">
    <property type="interactions" value="7"/>
</dbReference>
<dbReference type="MINT" id="Q9URY2"/>
<dbReference type="STRING" id="284812.Q9URY2"/>
<dbReference type="iPTMnet" id="Q9URY2"/>
<dbReference type="PaxDb" id="4896-SPAC890.02c.1"/>
<dbReference type="EnsemblFungi" id="SPAC890.02c.1">
    <property type="protein sequence ID" value="SPAC890.02c.1:pep"/>
    <property type="gene ID" value="SPAC890.02c"/>
</dbReference>
<dbReference type="GeneID" id="2543382"/>
<dbReference type="KEGG" id="spo:2543382"/>
<dbReference type="PomBase" id="SPAC890.02c">
    <property type="gene designation" value="alp7"/>
</dbReference>
<dbReference type="VEuPathDB" id="FungiDB:SPAC890.02c"/>
<dbReference type="eggNOG" id="ENOG502S2YR">
    <property type="taxonomic scope" value="Eukaryota"/>
</dbReference>
<dbReference type="HOGENOM" id="CLU_546472_0_0_1"/>
<dbReference type="InParanoid" id="Q9URY2"/>
<dbReference type="OMA" id="PEFKHRK"/>
<dbReference type="CD-CODE" id="576F0A76">
    <property type="entry name" value="Centrosome"/>
</dbReference>
<dbReference type="PRO" id="PR:Q9URY2"/>
<dbReference type="Proteomes" id="UP000002485">
    <property type="component" value="Chromosome I"/>
</dbReference>
<dbReference type="GO" id="GO:0005737">
    <property type="term" value="C:cytoplasm"/>
    <property type="evidence" value="ECO:0000314"/>
    <property type="project" value="PomBase"/>
</dbReference>
<dbReference type="GO" id="GO:0005881">
    <property type="term" value="C:cytoplasmic microtubule"/>
    <property type="evidence" value="ECO:0000314"/>
    <property type="project" value="PomBase"/>
</dbReference>
<dbReference type="GO" id="GO:1905720">
    <property type="term" value="C:cytoplasmic microtubule bundle"/>
    <property type="evidence" value="ECO:0000314"/>
    <property type="project" value="PomBase"/>
</dbReference>
<dbReference type="GO" id="GO:1904511">
    <property type="term" value="C:cytoplasmic microtubule plus-end"/>
    <property type="evidence" value="ECO:0000314"/>
    <property type="project" value="PomBase"/>
</dbReference>
<dbReference type="GO" id="GO:0000923">
    <property type="term" value="C:equatorial microtubule organizing center"/>
    <property type="evidence" value="ECO:0000314"/>
    <property type="project" value="PomBase"/>
</dbReference>
<dbReference type="GO" id="GO:0000776">
    <property type="term" value="C:kinetochore"/>
    <property type="evidence" value="ECO:0000314"/>
    <property type="project" value="PomBase"/>
</dbReference>
<dbReference type="GO" id="GO:0036449">
    <property type="term" value="C:microtubule minus-end"/>
    <property type="evidence" value="ECO:0000314"/>
    <property type="project" value="PomBase"/>
</dbReference>
<dbReference type="GO" id="GO:0072686">
    <property type="term" value="C:mitotic spindle"/>
    <property type="evidence" value="ECO:0000314"/>
    <property type="project" value="PomBase"/>
</dbReference>
<dbReference type="GO" id="GO:1990498">
    <property type="term" value="C:mitotic spindle microtubule"/>
    <property type="evidence" value="ECO:0000314"/>
    <property type="project" value="PomBase"/>
</dbReference>
<dbReference type="GO" id="GO:0097431">
    <property type="term" value="C:mitotic spindle pole"/>
    <property type="evidence" value="ECO:0000314"/>
    <property type="project" value="PomBase"/>
</dbReference>
<dbReference type="GO" id="GO:0044732">
    <property type="term" value="C:mitotic spindle pole body"/>
    <property type="evidence" value="ECO:0000314"/>
    <property type="project" value="PomBase"/>
</dbReference>
<dbReference type="GO" id="GO:0005634">
    <property type="term" value="C:nucleus"/>
    <property type="evidence" value="ECO:0000314"/>
    <property type="project" value="PomBase"/>
</dbReference>
<dbReference type="GO" id="GO:0000940">
    <property type="term" value="C:outer kinetochore"/>
    <property type="evidence" value="ECO:0000314"/>
    <property type="project" value="PomBase"/>
</dbReference>
<dbReference type="GO" id="GO:0099070">
    <property type="term" value="C:static microtubule bundle"/>
    <property type="evidence" value="ECO:0000314"/>
    <property type="project" value="PomBase"/>
</dbReference>
<dbReference type="GO" id="GO:0070850">
    <property type="term" value="C:TACC/TOG complex"/>
    <property type="evidence" value="ECO:0000314"/>
    <property type="project" value="PomBase"/>
</dbReference>
<dbReference type="GO" id="GO:0008017">
    <property type="term" value="F:microtubule binding"/>
    <property type="evidence" value="ECO:0000314"/>
    <property type="project" value="PomBase"/>
</dbReference>
<dbReference type="GO" id="GO:0030953">
    <property type="term" value="P:astral microtubule organization"/>
    <property type="evidence" value="ECO:0000315"/>
    <property type="project" value="PomBase"/>
</dbReference>
<dbReference type="GO" id="GO:0051315">
    <property type="term" value="P:attachment of mitotic spindle microtubules to kinetochore"/>
    <property type="evidence" value="ECO:0000315"/>
    <property type="project" value="PomBase"/>
</dbReference>
<dbReference type="GO" id="GO:0031122">
    <property type="term" value="P:cytoplasmic microtubule organization"/>
    <property type="evidence" value="ECO:0000315"/>
    <property type="project" value="PomBase"/>
</dbReference>
<dbReference type="GO" id="GO:1990571">
    <property type="term" value="P:meiotic centromere clustering"/>
    <property type="evidence" value="ECO:0000315"/>
    <property type="project" value="PomBase"/>
</dbReference>
<dbReference type="GO" id="GO:0051415">
    <property type="term" value="P:microtubule nucleation by interphase microtubule organizing center"/>
    <property type="evidence" value="ECO:0000315"/>
    <property type="project" value="PomBase"/>
</dbReference>
<dbReference type="GO" id="GO:0007079">
    <property type="term" value="P:mitotic chromosome movement towards spindle pole"/>
    <property type="evidence" value="ECO:0000315"/>
    <property type="project" value="PomBase"/>
</dbReference>
<dbReference type="GO" id="GO:0090307">
    <property type="term" value="P:mitotic spindle assembly"/>
    <property type="evidence" value="ECO:0000315"/>
    <property type="project" value="PomBase"/>
</dbReference>
<dbReference type="GO" id="GO:0061805">
    <property type="term" value="P:mitotic spindle elongation (spindle phase three)"/>
    <property type="evidence" value="ECO:0000315"/>
    <property type="project" value="PomBase"/>
</dbReference>
<dbReference type="GO" id="GO:0061804">
    <property type="term" value="P:mitotic spindle formation (spindle phase one)"/>
    <property type="evidence" value="ECO:0000315"/>
    <property type="project" value="PomBase"/>
</dbReference>
<dbReference type="GO" id="GO:0140210">
    <property type="term" value="P:protein transport along microtubule to kinetochore"/>
    <property type="evidence" value="ECO:0000315"/>
    <property type="project" value="PomBase"/>
</dbReference>
<dbReference type="InterPro" id="IPR024312">
    <property type="entry name" value="TACC_fungi"/>
</dbReference>
<dbReference type="Pfam" id="PF12709">
    <property type="entry name" value="Fungal_TACC"/>
    <property type="match status" value="1"/>
</dbReference>
<gene>
    <name type="primary">alp7</name>
    <name type="synonym">mia1</name>
    <name type="ORF">SPAC890.02c</name>
</gene>
<name>ALP7_SCHPO</name>
<keyword id="KW-0137">Centromere</keyword>
<keyword id="KW-0158">Chromosome</keyword>
<keyword id="KW-0175">Coiled coil</keyword>
<keyword id="KW-0963">Cytoplasm</keyword>
<keyword id="KW-0206">Cytoskeleton</keyword>
<keyword id="KW-0995">Kinetochore</keyword>
<keyword id="KW-0493">Microtubule</keyword>
<keyword id="KW-0539">Nucleus</keyword>
<keyword id="KW-0597">Phosphoprotein</keyword>
<keyword id="KW-1185">Reference proteome</keyword>
<protein>
    <recommendedName>
        <fullName>Microtubule protein alp7</fullName>
    </recommendedName>
    <alternativeName>
        <fullName>Altered polarity protein 7</fullName>
    </alternativeName>
    <alternativeName>
        <fullName>Transforming acidic coiled-coil protein mia1</fullName>
        <shortName>TACC protein mia1</shortName>
    </alternativeName>
</protein>
<evidence type="ECO:0000255" key="1"/>
<evidence type="ECO:0000256" key="2">
    <source>
        <dbReference type="SAM" id="MobiDB-lite"/>
    </source>
</evidence>
<evidence type="ECO:0000269" key="3">
    <source>
    </source>
</evidence>
<evidence type="ECO:0000269" key="4">
    <source>
    </source>
</evidence>
<evidence type="ECO:0000269" key="5">
    <source>
    </source>
</evidence>